<protein>
    <recommendedName>
        <fullName evidence="1">Nucleoid-associated protein PCC7424_2224</fullName>
    </recommendedName>
</protein>
<keyword id="KW-0963">Cytoplasm</keyword>
<keyword id="KW-0238">DNA-binding</keyword>
<keyword id="KW-1185">Reference proteome</keyword>
<sequence>MAQGKGFGFGLGKIKELQEAFQKAQQVQEGAKQLQDELEQMSIEGHSSDGSVTVVMSGNQEPRSVTIQPTALEKGAEELSTLVTEAMKDAYSKSTDTMRQKMEELTSGLNLPGL</sequence>
<gene>
    <name type="ordered locus">PCC7424_2224</name>
</gene>
<proteinExistence type="inferred from homology"/>
<name>Y2224_GLOC7</name>
<organism>
    <name type="scientific">Gloeothece citriformis (strain PCC 7424)</name>
    <name type="common">Cyanothece sp. (strain PCC 7424)</name>
    <dbReference type="NCBI Taxonomy" id="65393"/>
    <lineage>
        <taxon>Bacteria</taxon>
        <taxon>Bacillati</taxon>
        <taxon>Cyanobacteriota</taxon>
        <taxon>Cyanophyceae</taxon>
        <taxon>Oscillatoriophycideae</taxon>
        <taxon>Chroococcales</taxon>
        <taxon>Aphanothecaceae</taxon>
        <taxon>Gloeothece</taxon>
        <taxon>Gloeothece citriformis</taxon>
    </lineage>
</organism>
<reference key="1">
    <citation type="journal article" date="2011" name="MBio">
        <title>Novel metabolic attributes of the genus Cyanothece, comprising a group of unicellular nitrogen-fixing Cyanobacteria.</title>
        <authorList>
            <person name="Bandyopadhyay A."/>
            <person name="Elvitigala T."/>
            <person name="Welsh E."/>
            <person name="Stockel J."/>
            <person name="Liberton M."/>
            <person name="Min H."/>
            <person name="Sherman L.A."/>
            <person name="Pakrasi H.B."/>
        </authorList>
    </citation>
    <scope>NUCLEOTIDE SEQUENCE [LARGE SCALE GENOMIC DNA]</scope>
    <source>
        <strain>PCC 7424</strain>
    </source>
</reference>
<evidence type="ECO:0000255" key="1">
    <source>
        <dbReference type="HAMAP-Rule" id="MF_00274"/>
    </source>
</evidence>
<comment type="function">
    <text evidence="1">Binds to DNA and alters its conformation. May be involved in regulation of gene expression, nucleoid organization and DNA protection.</text>
</comment>
<comment type="subunit">
    <text evidence="1">Homodimer.</text>
</comment>
<comment type="subcellular location">
    <subcellularLocation>
        <location evidence="1">Cytoplasm</location>
        <location evidence="1">Nucleoid</location>
    </subcellularLocation>
</comment>
<comment type="similarity">
    <text evidence="1">Belongs to the YbaB/EbfC family.</text>
</comment>
<feature type="chain" id="PRO_1000119314" description="Nucleoid-associated protein PCC7424_2224">
    <location>
        <begin position="1"/>
        <end position="114"/>
    </location>
</feature>
<dbReference type="EMBL" id="CP001291">
    <property type="protein sequence ID" value="ACK70646.1"/>
    <property type="molecule type" value="Genomic_DNA"/>
</dbReference>
<dbReference type="RefSeq" id="WP_015954251.1">
    <property type="nucleotide sequence ID" value="NC_011729.1"/>
</dbReference>
<dbReference type="SMR" id="B7KHF1"/>
<dbReference type="STRING" id="65393.PCC7424_2224"/>
<dbReference type="KEGG" id="cyc:PCC7424_2224"/>
<dbReference type="eggNOG" id="COG0718">
    <property type="taxonomic scope" value="Bacteria"/>
</dbReference>
<dbReference type="HOGENOM" id="CLU_140930_0_1_3"/>
<dbReference type="OrthoDB" id="487780at2"/>
<dbReference type="Proteomes" id="UP000002384">
    <property type="component" value="Chromosome"/>
</dbReference>
<dbReference type="GO" id="GO:0043590">
    <property type="term" value="C:bacterial nucleoid"/>
    <property type="evidence" value="ECO:0007669"/>
    <property type="project" value="UniProtKB-UniRule"/>
</dbReference>
<dbReference type="GO" id="GO:0005829">
    <property type="term" value="C:cytosol"/>
    <property type="evidence" value="ECO:0007669"/>
    <property type="project" value="TreeGrafter"/>
</dbReference>
<dbReference type="GO" id="GO:0003677">
    <property type="term" value="F:DNA binding"/>
    <property type="evidence" value="ECO:0007669"/>
    <property type="project" value="UniProtKB-UniRule"/>
</dbReference>
<dbReference type="Gene3D" id="3.30.1310.10">
    <property type="entry name" value="Nucleoid-associated protein YbaB-like domain"/>
    <property type="match status" value="1"/>
</dbReference>
<dbReference type="HAMAP" id="MF_00274">
    <property type="entry name" value="DNA_YbaB_EbfC"/>
    <property type="match status" value="1"/>
</dbReference>
<dbReference type="InterPro" id="IPR036894">
    <property type="entry name" value="YbaB-like_sf"/>
</dbReference>
<dbReference type="InterPro" id="IPR004401">
    <property type="entry name" value="YbaB/EbfC"/>
</dbReference>
<dbReference type="NCBIfam" id="TIGR00103">
    <property type="entry name" value="DNA_YbaB_EbfC"/>
    <property type="match status" value="1"/>
</dbReference>
<dbReference type="PANTHER" id="PTHR33449">
    <property type="entry name" value="NUCLEOID-ASSOCIATED PROTEIN YBAB"/>
    <property type="match status" value="1"/>
</dbReference>
<dbReference type="PANTHER" id="PTHR33449:SF1">
    <property type="entry name" value="NUCLEOID-ASSOCIATED PROTEIN YBAB"/>
    <property type="match status" value="1"/>
</dbReference>
<dbReference type="Pfam" id="PF02575">
    <property type="entry name" value="YbaB_DNA_bd"/>
    <property type="match status" value="1"/>
</dbReference>
<dbReference type="PIRSF" id="PIRSF004555">
    <property type="entry name" value="UCP004555"/>
    <property type="match status" value="1"/>
</dbReference>
<dbReference type="SUPFAM" id="SSF82607">
    <property type="entry name" value="YbaB-like"/>
    <property type="match status" value="1"/>
</dbReference>
<accession>B7KHF1</accession>